<sequence>MNIALIAHDKKKELMVQFAIAYKFILSKHTLYATGTTGRLIQEATGLEVHRFLPGPLGGDQQIGSLIAYNQIDMVIFLRDPLTAQPHEPDVNALLRLCDVHNIPLATNIATAELLIKALDRGDLSWREIVNPKLQKNKSDK</sequence>
<proteinExistence type="inferred from homology"/>
<evidence type="ECO:0000255" key="1">
    <source>
        <dbReference type="HAMAP-Rule" id="MF_00549"/>
    </source>
</evidence>
<protein>
    <recommendedName>
        <fullName evidence="1">Methylglyoxal synthase</fullName>
        <shortName evidence="1">MGS</shortName>
        <ecNumber evidence="1">4.2.3.3</ecNumber>
    </recommendedName>
</protein>
<keyword id="KW-0456">Lyase</keyword>
<dbReference type="EC" id="4.2.3.3" evidence="1"/>
<dbReference type="EMBL" id="CP000679">
    <property type="protein sequence ID" value="ABP67459.1"/>
    <property type="molecule type" value="Genomic_DNA"/>
</dbReference>
<dbReference type="RefSeq" id="WP_011917393.1">
    <property type="nucleotide sequence ID" value="NC_009437.1"/>
</dbReference>
<dbReference type="SMR" id="A4XKM4"/>
<dbReference type="STRING" id="351627.Csac_1874"/>
<dbReference type="GeneID" id="31772658"/>
<dbReference type="KEGG" id="csc:Csac_1874"/>
<dbReference type="eggNOG" id="COG1803">
    <property type="taxonomic scope" value="Bacteria"/>
</dbReference>
<dbReference type="HOGENOM" id="CLU_120420_1_0_9"/>
<dbReference type="OrthoDB" id="9787147at2"/>
<dbReference type="Proteomes" id="UP000000256">
    <property type="component" value="Chromosome"/>
</dbReference>
<dbReference type="GO" id="GO:0005829">
    <property type="term" value="C:cytosol"/>
    <property type="evidence" value="ECO:0007669"/>
    <property type="project" value="TreeGrafter"/>
</dbReference>
<dbReference type="GO" id="GO:0008929">
    <property type="term" value="F:methylglyoxal synthase activity"/>
    <property type="evidence" value="ECO:0007669"/>
    <property type="project" value="UniProtKB-UniRule"/>
</dbReference>
<dbReference type="GO" id="GO:0019242">
    <property type="term" value="P:methylglyoxal biosynthetic process"/>
    <property type="evidence" value="ECO:0007669"/>
    <property type="project" value="UniProtKB-UniRule"/>
</dbReference>
<dbReference type="CDD" id="cd01422">
    <property type="entry name" value="MGS"/>
    <property type="match status" value="1"/>
</dbReference>
<dbReference type="FunFam" id="3.40.50.1380:FF:000006">
    <property type="entry name" value="Methylglyoxal synthase"/>
    <property type="match status" value="1"/>
</dbReference>
<dbReference type="Gene3D" id="3.40.50.1380">
    <property type="entry name" value="Methylglyoxal synthase-like domain"/>
    <property type="match status" value="1"/>
</dbReference>
<dbReference type="HAMAP" id="MF_00549">
    <property type="entry name" value="Methylglyoxal_synth"/>
    <property type="match status" value="1"/>
</dbReference>
<dbReference type="InterPro" id="IPR004363">
    <property type="entry name" value="Methylgl_synth"/>
</dbReference>
<dbReference type="InterPro" id="IPR018148">
    <property type="entry name" value="Methylglyoxal_synth_AS"/>
</dbReference>
<dbReference type="InterPro" id="IPR011607">
    <property type="entry name" value="MGS-like_dom"/>
</dbReference>
<dbReference type="InterPro" id="IPR036914">
    <property type="entry name" value="MGS-like_dom_sf"/>
</dbReference>
<dbReference type="NCBIfam" id="TIGR00160">
    <property type="entry name" value="MGSA"/>
    <property type="match status" value="1"/>
</dbReference>
<dbReference type="NCBIfam" id="NF003559">
    <property type="entry name" value="PRK05234.1"/>
    <property type="match status" value="1"/>
</dbReference>
<dbReference type="PANTHER" id="PTHR30492">
    <property type="entry name" value="METHYLGLYOXAL SYNTHASE"/>
    <property type="match status" value="1"/>
</dbReference>
<dbReference type="PANTHER" id="PTHR30492:SF0">
    <property type="entry name" value="METHYLGLYOXAL SYNTHASE"/>
    <property type="match status" value="1"/>
</dbReference>
<dbReference type="Pfam" id="PF02142">
    <property type="entry name" value="MGS"/>
    <property type="match status" value="1"/>
</dbReference>
<dbReference type="PIRSF" id="PIRSF006614">
    <property type="entry name" value="Methylglyox_syn"/>
    <property type="match status" value="1"/>
</dbReference>
<dbReference type="SMART" id="SM00851">
    <property type="entry name" value="MGS"/>
    <property type="match status" value="1"/>
</dbReference>
<dbReference type="SUPFAM" id="SSF52335">
    <property type="entry name" value="Methylglyoxal synthase-like"/>
    <property type="match status" value="1"/>
</dbReference>
<dbReference type="PROSITE" id="PS01335">
    <property type="entry name" value="METHYLGLYOXAL_SYNTH"/>
    <property type="match status" value="1"/>
</dbReference>
<dbReference type="PROSITE" id="PS51855">
    <property type="entry name" value="MGS"/>
    <property type="match status" value="1"/>
</dbReference>
<gene>
    <name evidence="1" type="primary">mgsA</name>
    <name type="ordered locus">Csac_1874</name>
</gene>
<name>MGSA_CALS8</name>
<feature type="chain" id="PRO_1000017801" description="Methylglyoxal synthase">
    <location>
        <begin position="1"/>
        <end position="141"/>
    </location>
</feature>
<feature type="domain" description="MGS-like" evidence="1">
    <location>
        <begin position="1"/>
        <end position="141"/>
    </location>
</feature>
<feature type="active site" description="Proton donor/acceptor" evidence="1">
    <location>
        <position position="60"/>
    </location>
</feature>
<feature type="binding site" evidence="1">
    <location>
        <position position="8"/>
    </location>
    <ligand>
        <name>substrate</name>
    </ligand>
</feature>
<feature type="binding site" evidence="1">
    <location>
        <position position="12"/>
    </location>
    <ligand>
        <name>substrate</name>
    </ligand>
</feature>
<feature type="binding site" evidence="1">
    <location>
        <begin position="34"/>
        <end position="37"/>
    </location>
    <ligand>
        <name>substrate</name>
    </ligand>
</feature>
<feature type="binding site" evidence="1">
    <location>
        <position position="87"/>
    </location>
    <ligand>
        <name>substrate</name>
    </ligand>
</feature>
<accession>A4XKM4</accession>
<reference key="1">
    <citation type="submission" date="2007-04" db="EMBL/GenBank/DDBJ databases">
        <title>Genome sequence of the thermophilic hydrogen-producing bacterium Caldicellulosiruptor saccharolyticus DSM 8903.</title>
        <authorList>
            <person name="Copeland A."/>
            <person name="Lucas S."/>
            <person name="Lapidus A."/>
            <person name="Barry K."/>
            <person name="Detter J.C."/>
            <person name="Glavina del Rio T."/>
            <person name="Hammon N."/>
            <person name="Israni S."/>
            <person name="Dalin E."/>
            <person name="Tice H."/>
            <person name="Pitluck S."/>
            <person name="Kiss H."/>
            <person name="Brettin T."/>
            <person name="Bruce D."/>
            <person name="Han C."/>
            <person name="Schmutz J."/>
            <person name="Larimer F."/>
            <person name="Land M."/>
            <person name="Hauser L."/>
            <person name="Kyrpides N."/>
            <person name="Lykidis A."/>
            <person name="van de Werken H.J.G."/>
            <person name="Verhaart M.R.A."/>
            <person name="VanFossen A.L."/>
            <person name="Lewis D.L."/>
            <person name="Nichols J.D."/>
            <person name="Goorissen H.P."/>
            <person name="van Niel E.W.J."/>
            <person name="Stams F.J.M."/>
            <person name="Willquist K.U."/>
            <person name="Ward D.E."/>
            <person name="van der Oost J."/>
            <person name="Kelly R.M."/>
            <person name="Kengen S.M.W."/>
            <person name="Richardson P."/>
        </authorList>
    </citation>
    <scope>NUCLEOTIDE SEQUENCE [LARGE SCALE GENOMIC DNA]</scope>
    <source>
        <strain>ATCC 43494 / DSM 8903 / Tp8T 6331</strain>
    </source>
</reference>
<organism>
    <name type="scientific">Caldicellulosiruptor saccharolyticus (strain ATCC 43494 / DSM 8903 / Tp8T 6331)</name>
    <dbReference type="NCBI Taxonomy" id="351627"/>
    <lineage>
        <taxon>Bacteria</taxon>
        <taxon>Bacillati</taxon>
        <taxon>Bacillota</taxon>
        <taxon>Bacillota incertae sedis</taxon>
        <taxon>Caldicellulosiruptorales</taxon>
        <taxon>Caldicellulosiruptoraceae</taxon>
        <taxon>Caldicellulosiruptor</taxon>
    </lineage>
</organism>
<comment type="function">
    <text evidence="1">Catalyzes the formation of methylglyoxal from dihydroxyacetone phosphate.</text>
</comment>
<comment type="catalytic activity">
    <reaction evidence="1">
        <text>dihydroxyacetone phosphate = methylglyoxal + phosphate</text>
        <dbReference type="Rhea" id="RHEA:17937"/>
        <dbReference type="ChEBI" id="CHEBI:17158"/>
        <dbReference type="ChEBI" id="CHEBI:43474"/>
        <dbReference type="ChEBI" id="CHEBI:57642"/>
        <dbReference type="EC" id="4.2.3.3"/>
    </reaction>
</comment>
<comment type="similarity">
    <text evidence="1">Belongs to the methylglyoxal synthase family.</text>
</comment>